<evidence type="ECO:0000255" key="1">
    <source>
        <dbReference type="HAMAP-Rule" id="MF_00317"/>
    </source>
</evidence>
<dbReference type="EMBL" id="AE009439">
    <property type="protein sequence ID" value="AAM02243.1"/>
    <property type="molecule type" value="Genomic_DNA"/>
</dbReference>
<dbReference type="SMR" id="Q8TWK3"/>
<dbReference type="FunCoup" id="Q8TWK3">
    <property type="interactions" value="151"/>
</dbReference>
<dbReference type="STRING" id="190192.MK1030"/>
<dbReference type="PaxDb" id="190192-MK1030"/>
<dbReference type="EnsemblBacteria" id="AAM02243">
    <property type="protein sequence ID" value="AAM02243"/>
    <property type="gene ID" value="MK1030"/>
</dbReference>
<dbReference type="KEGG" id="mka:MK1030"/>
<dbReference type="HOGENOM" id="CLU_043978_1_0_2"/>
<dbReference type="InParanoid" id="Q8TWK3"/>
<dbReference type="OrthoDB" id="14749at2157"/>
<dbReference type="Proteomes" id="UP000001826">
    <property type="component" value="Chromosome"/>
</dbReference>
<dbReference type="GO" id="GO:0003677">
    <property type="term" value="F:DNA binding"/>
    <property type="evidence" value="ECO:0007669"/>
    <property type="project" value="UniProtKB-UniRule"/>
</dbReference>
<dbReference type="GO" id="GO:0030337">
    <property type="term" value="F:DNA polymerase processivity factor activity"/>
    <property type="evidence" value="ECO:0007669"/>
    <property type="project" value="UniProtKB-UniRule"/>
</dbReference>
<dbReference type="GO" id="GO:0006272">
    <property type="term" value="P:leading strand elongation"/>
    <property type="evidence" value="ECO:0007669"/>
    <property type="project" value="TreeGrafter"/>
</dbReference>
<dbReference type="GO" id="GO:0006275">
    <property type="term" value="P:regulation of DNA replication"/>
    <property type="evidence" value="ECO:0007669"/>
    <property type="project" value="UniProtKB-UniRule"/>
</dbReference>
<dbReference type="CDD" id="cd00577">
    <property type="entry name" value="PCNA"/>
    <property type="match status" value="1"/>
</dbReference>
<dbReference type="Gene3D" id="3.70.10.10">
    <property type="match status" value="1"/>
</dbReference>
<dbReference type="HAMAP" id="MF_00317">
    <property type="entry name" value="DNApol_clamp_arch"/>
    <property type="match status" value="1"/>
</dbReference>
<dbReference type="InterPro" id="IPR046938">
    <property type="entry name" value="DNA_clamp_sf"/>
</dbReference>
<dbReference type="InterPro" id="IPR000730">
    <property type="entry name" value="Pr_cel_nuc_antig"/>
</dbReference>
<dbReference type="InterPro" id="IPR022649">
    <property type="entry name" value="Pr_cel_nuc_antig_C"/>
</dbReference>
<dbReference type="InterPro" id="IPR022659">
    <property type="entry name" value="Pr_cel_nuc_antig_CS"/>
</dbReference>
<dbReference type="InterPro" id="IPR022648">
    <property type="entry name" value="Pr_cel_nuc_antig_N"/>
</dbReference>
<dbReference type="NCBIfam" id="TIGR00590">
    <property type="entry name" value="pcna"/>
    <property type="match status" value="1"/>
</dbReference>
<dbReference type="PANTHER" id="PTHR11352">
    <property type="entry name" value="PROLIFERATING CELL NUCLEAR ANTIGEN"/>
    <property type="match status" value="1"/>
</dbReference>
<dbReference type="PANTHER" id="PTHR11352:SF0">
    <property type="entry name" value="PROLIFERATING CELL NUCLEAR ANTIGEN"/>
    <property type="match status" value="1"/>
</dbReference>
<dbReference type="Pfam" id="PF02747">
    <property type="entry name" value="PCNA_C"/>
    <property type="match status" value="1"/>
</dbReference>
<dbReference type="Pfam" id="PF00705">
    <property type="entry name" value="PCNA_N"/>
    <property type="match status" value="1"/>
</dbReference>
<dbReference type="PRINTS" id="PR00339">
    <property type="entry name" value="PCNACYCLIN"/>
</dbReference>
<dbReference type="SUPFAM" id="SSF55979">
    <property type="entry name" value="DNA clamp"/>
    <property type="match status" value="2"/>
</dbReference>
<dbReference type="PROSITE" id="PS01251">
    <property type="entry name" value="PCNA_1"/>
    <property type="match status" value="1"/>
</dbReference>
<feature type="chain" id="PRO_0000149197" description="DNA polymerase sliding clamp">
    <location>
        <begin position="1"/>
        <end position="253"/>
    </location>
</feature>
<protein>
    <recommendedName>
        <fullName evidence="1">DNA polymerase sliding clamp</fullName>
    </recommendedName>
    <alternativeName>
        <fullName evidence="1">Proliferating cell nuclear antigen homolog</fullName>
        <shortName evidence="1">PCNA</shortName>
    </alternativeName>
</protein>
<organism>
    <name type="scientific">Methanopyrus kandleri (strain AV19 / DSM 6324 / JCM 9639 / NBRC 100938)</name>
    <dbReference type="NCBI Taxonomy" id="190192"/>
    <lineage>
        <taxon>Archaea</taxon>
        <taxon>Methanobacteriati</taxon>
        <taxon>Methanobacteriota</taxon>
        <taxon>Methanomada group</taxon>
        <taxon>Methanopyri</taxon>
        <taxon>Methanopyrales</taxon>
        <taxon>Methanopyraceae</taxon>
        <taxon>Methanopyrus</taxon>
    </lineage>
</organism>
<proteinExistence type="inferred from homology"/>
<gene>
    <name evidence="1" type="primary">pcn</name>
    <name type="ordered locus">MK1030</name>
</gene>
<accession>Q8TWK3</accession>
<name>PCNA_METKA</name>
<comment type="function">
    <text evidence="1">Sliding clamp subunit that acts as a moving platform for DNA processing. Responsible for tethering the catalytic subunit of DNA polymerase and other proteins to DNA during high-speed replication.</text>
</comment>
<comment type="subunit">
    <text evidence="1">Homotrimer. The subunits circularize to form a toroid; DNA passes through its center. Replication factor C (RFC) is required to load the toroid on the DNA.</text>
</comment>
<comment type="similarity">
    <text evidence="1">Belongs to the PCNA family.</text>
</comment>
<reference key="1">
    <citation type="journal article" date="2002" name="Proc. Natl. Acad. Sci. U.S.A.">
        <title>The complete genome of hyperthermophile Methanopyrus kandleri AV19 and monophyly of archaeal methanogens.</title>
        <authorList>
            <person name="Slesarev A.I."/>
            <person name="Mezhevaya K.V."/>
            <person name="Makarova K.S."/>
            <person name="Polushin N.N."/>
            <person name="Shcherbinina O.V."/>
            <person name="Shakhova V.V."/>
            <person name="Belova G.I."/>
            <person name="Aravind L."/>
            <person name="Natale D.A."/>
            <person name="Rogozin I.B."/>
            <person name="Tatusov R.L."/>
            <person name="Wolf Y.I."/>
            <person name="Stetter K.O."/>
            <person name="Malykh A.G."/>
            <person name="Koonin E.V."/>
            <person name="Kozyavkin S.A."/>
        </authorList>
    </citation>
    <scope>NUCLEOTIDE SEQUENCE [LARGE SCALE GENOMIC DNA]</scope>
    <source>
        <strain>AV19 / DSM 6324 / JCM 9639 / NBRC 100938</strain>
    </source>
</reference>
<sequence length="253" mass="28625">MVEFRAYQEEARYFKYAFNAAGKVVEEAPLIVTENGIVSRAMDASHIAMAVLEMPWEMFDEYEPPSDELMYGLDMEEVTRIVRRARVTDEITLEGEDEEEVIIKLGSSGYEREFRLRSIDIDDIPDEPELDFAVEVTVVPDFIQDAVRDADLVSDTVKVGAKGNTFYFKAEGERGRVIPKVQEGAEALLTFEVEEDVETAYPLDYLKDMIQAAQGAESVRIRLGQDMPLELTFRIGPAGEGKLTFYLAPRVEE</sequence>
<keyword id="KW-0235">DNA replication</keyword>
<keyword id="KW-0238">DNA-binding</keyword>
<keyword id="KW-1185">Reference proteome</keyword>